<reference key="1">
    <citation type="journal article" date="2006" name="J. Bacteriol.">
        <title>Comparative genomic evidence for a close relationship between the dimorphic prosthecate bacteria Hyphomonas neptunium and Caulobacter crescentus.</title>
        <authorList>
            <person name="Badger J.H."/>
            <person name="Hoover T.R."/>
            <person name="Brun Y.V."/>
            <person name="Weiner R.M."/>
            <person name="Laub M.T."/>
            <person name="Alexandre G."/>
            <person name="Mrazek J."/>
            <person name="Ren Q."/>
            <person name="Paulsen I.T."/>
            <person name="Nelson K.E."/>
            <person name="Khouri H.M."/>
            <person name="Radune D."/>
            <person name="Sosa J."/>
            <person name="Dodson R.J."/>
            <person name="Sullivan S.A."/>
            <person name="Rosovitz M.J."/>
            <person name="Madupu R."/>
            <person name="Brinkac L.M."/>
            <person name="Durkin A.S."/>
            <person name="Daugherty S.C."/>
            <person name="Kothari S.P."/>
            <person name="Giglio M.G."/>
            <person name="Zhou L."/>
            <person name="Haft D.H."/>
            <person name="Selengut J.D."/>
            <person name="Davidsen T.M."/>
            <person name="Yang Q."/>
            <person name="Zafar N."/>
            <person name="Ward N.L."/>
        </authorList>
    </citation>
    <scope>NUCLEOTIDE SEQUENCE [LARGE SCALE GENOMIC DNA]</scope>
    <source>
        <strain>ATCC 15444</strain>
    </source>
</reference>
<accession>Q0C0L1</accession>
<proteinExistence type="inferred from homology"/>
<dbReference type="EMBL" id="CP000158">
    <property type="protein sequence ID" value="ABI78629.1"/>
    <property type="molecule type" value="Genomic_DNA"/>
</dbReference>
<dbReference type="RefSeq" id="WP_011647031.1">
    <property type="nucleotide sequence ID" value="NC_008358.1"/>
</dbReference>
<dbReference type="SMR" id="Q0C0L1"/>
<dbReference type="STRING" id="228405.HNE_2034"/>
<dbReference type="KEGG" id="hne:HNE_2034"/>
<dbReference type="eggNOG" id="COG1220">
    <property type="taxonomic scope" value="Bacteria"/>
</dbReference>
<dbReference type="HOGENOM" id="CLU_033123_0_0_5"/>
<dbReference type="Proteomes" id="UP000001959">
    <property type="component" value="Chromosome"/>
</dbReference>
<dbReference type="GO" id="GO:0009376">
    <property type="term" value="C:HslUV protease complex"/>
    <property type="evidence" value="ECO:0007669"/>
    <property type="project" value="UniProtKB-UniRule"/>
</dbReference>
<dbReference type="GO" id="GO:0005524">
    <property type="term" value="F:ATP binding"/>
    <property type="evidence" value="ECO:0007669"/>
    <property type="project" value="UniProtKB-UniRule"/>
</dbReference>
<dbReference type="GO" id="GO:0016887">
    <property type="term" value="F:ATP hydrolysis activity"/>
    <property type="evidence" value="ECO:0007669"/>
    <property type="project" value="InterPro"/>
</dbReference>
<dbReference type="GO" id="GO:0008233">
    <property type="term" value="F:peptidase activity"/>
    <property type="evidence" value="ECO:0007669"/>
    <property type="project" value="InterPro"/>
</dbReference>
<dbReference type="GO" id="GO:0036402">
    <property type="term" value="F:proteasome-activating activity"/>
    <property type="evidence" value="ECO:0007669"/>
    <property type="project" value="UniProtKB-UniRule"/>
</dbReference>
<dbReference type="GO" id="GO:0043335">
    <property type="term" value="P:protein unfolding"/>
    <property type="evidence" value="ECO:0007669"/>
    <property type="project" value="UniProtKB-UniRule"/>
</dbReference>
<dbReference type="GO" id="GO:0051603">
    <property type="term" value="P:proteolysis involved in protein catabolic process"/>
    <property type="evidence" value="ECO:0007669"/>
    <property type="project" value="TreeGrafter"/>
</dbReference>
<dbReference type="CDD" id="cd19498">
    <property type="entry name" value="RecA-like_HslU"/>
    <property type="match status" value="1"/>
</dbReference>
<dbReference type="FunFam" id="3.40.50.300:FF:000213">
    <property type="entry name" value="ATP-dependent protease ATPase subunit HslU"/>
    <property type="match status" value="1"/>
</dbReference>
<dbReference type="FunFam" id="3.40.50.300:FF:000220">
    <property type="entry name" value="ATP-dependent protease ATPase subunit HslU"/>
    <property type="match status" value="1"/>
</dbReference>
<dbReference type="Gene3D" id="1.10.8.60">
    <property type="match status" value="1"/>
</dbReference>
<dbReference type="Gene3D" id="3.40.50.300">
    <property type="entry name" value="P-loop containing nucleotide triphosphate hydrolases"/>
    <property type="match status" value="2"/>
</dbReference>
<dbReference type="HAMAP" id="MF_00249">
    <property type="entry name" value="HslU"/>
    <property type="match status" value="1"/>
</dbReference>
<dbReference type="InterPro" id="IPR003593">
    <property type="entry name" value="AAA+_ATPase"/>
</dbReference>
<dbReference type="InterPro" id="IPR050052">
    <property type="entry name" value="ATP-dep_Clp_protease_ClpX"/>
</dbReference>
<dbReference type="InterPro" id="IPR003959">
    <property type="entry name" value="ATPase_AAA_core"/>
</dbReference>
<dbReference type="InterPro" id="IPR019489">
    <property type="entry name" value="Clp_ATPase_C"/>
</dbReference>
<dbReference type="InterPro" id="IPR004491">
    <property type="entry name" value="HslU"/>
</dbReference>
<dbReference type="InterPro" id="IPR027417">
    <property type="entry name" value="P-loop_NTPase"/>
</dbReference>
<dbReference type="NCBIfam" id="TIGR00390">
    <property type="entry name" value="hslU"/>
    <property type="match status" value="1"/>
</dbReference>
<dbReference type="NCBIfam" id="NF003544">
    <property type="entry name" value="PRK05201.1"/>
    <property type="match status" value="1"/>
</dbReference>
<dbReference type="PANTHER" id="PTHR48102">
    <property type="entry name" value="ATP-DEPENDENT CLP PROTEASE ATP-BINDING SUBUNIT CLPX-LIKE, MITOCHONDRIAL-RELATED"/>
    <property type="match status" value="1"/>
</dbReference>
<dbReference type="PANTHER" id="PTHR48102:SF3">
    <property type="entry name" value="ATP-DEPENDENT PROTEASE ATPASE SUBUNIT HSLU"/>
    <property type="match status" value="1"/>
</dbReference>
<dbReference type="Pfam" id="PF00004">
    <property type="entry name" value="AAA"/>
    <property type="match status" value="1"/>
</dbReference>
<dbReference type="Pfam" id="PF07724">
    <property type="entry name" value="AAA_2"/>
    <property type="match status" value="1"/>
</dbReference>
<dbReference type="SMART" id="SM00382">
    <property type="entry name" value="AAA"/>
    <property type="match status" value="1"/>
</dbReference>
<dbReference type="SMART" id="SM01086">
    <property type="entry name" value="ClpB_D2-small"/>
    <property type="match status" value="1"/>
</dbReference>
<dbReference type="SUPFAM" id="SSF52540">
    <property type="entry name" value="P-loop containing nucleoside triphosphate hydrolases"/>
    <property type="match status" value="1"/>
</dbReference>
<sequence length="434" mass="47899">MKHLTPREIVAELDRHIVGQNAAKRAVAIALRNRWRRKQAPENLRGEITPKNILMIGPTGVGKTEVSRRLARLANAPFLKVEATKFTEVGYVGRDVEQIVRDLVEAAVGMIREQKRAGVDKAARDKAEERLLDALVGAEAQSSTREVFRRKLRAGELDDKEVDLDFADTNNPMQMLDLPGQGGSMSMINLGDMLGKAMGGRTRRVRTTVREAAKPLVTEEADKLVDEEQIVREAIMAVEEDGIVFLDEIDKIAARKDRGGADVSREGVQRDLLPLIEGTTVSTKRGAVKTDHILFIASGAFHVAKPSDLLPELQGRLPIRVELEPLTRDDLRRILVEPQASLIRQYEALMAAENVTLTFEDGAIDRIADMAEAVNKSIENIGARRLQTILERLLDDISFDAPDKGGETFTITASYVDEKVGSLAGNADLSKFIL</sequence>
<evidence type="ECO:0000255" key="1">
    <source>
        <dbReference type="HAMAP-Rule" id="MF_00249"/>
    </source>
</evidence>
<feature type="chain" id="PRO_1000012750" description="ATP-dependent protease ATPase subunit HslU">
    <location>
        <begin position="1"/>
        <end position="434"/>
    </location>
</feature>
<feature type="binding site" evidence="1">
    <location>
        <position position="18"/>
    </location>
    <ligand>
        <name>ATP</name>
        <dbReference type="ChEBI" id="CHEBI:30616"/>
    </ligand>
</feature>
<feature type="binding site" evidence="1">
    <location>
        <begin position="60"/>
        <end position="65"/>
    </location>
    <ligand>
        <name>ATP</name>
        <dbReference type="ChEBI" id="CHEBI:30616"/>
    </ligand>
</feature>
<feature type="binding site" evidence="1">
    <location>
        <position position="247"/>
    </location>
    <ligand>
        <name>ATP</name>
        <dbReference type="ChEBI" id="CHEBI:30616"/>
    </ligand>
</feature>
<feature type="binding site" evidence="1">
    <location>
        <position position="312"/>
    </location>
    <ligand>
        <name>ATP</name>
        <dbReference type="ChEBI" id="CHEBI:30616"/>
    </ligand>
</feature>
<feature type="binding site" evidence="1">
    <location>
        <position position="384"/>
    </location>
    <ligand>
        <name>ATP</name>
        <dbReference type="ChEBI" id="CHEBI:30616"/>
    </ligand>
</feature>
<comment type="function">
    <text evidence="1">ATPase subunit of a proteasome-like degradation complex; this subunit has chaperone activity. The binding of ATP and its subsequent hydrolysis by HslU are essential for unfolding of protein substrates subsequently hydrolyzed by HslV. HslU recognizes the N-terminal part of its protein substrates and unfolds these before they are guided to HslV for hydrolysis.</text>
</comment>
<comment type="subunit">
    <text evidence="1">A double ring-shaped homohexamer of HslV is capped on each side by a ring-shaped HslU homohexamer. The assembly of the HslU/HslV complex is dependent on binding of ATP.</text>
</comment>
<comment type="subcellular location">
    <subcellularLocation>
        <location evidence="1">Cytoplasm</location>
    </subcellularLocation>
</comment>
<comment type="similarity">
    <text evidence="1">Belongs to the ClpX chaperone family. HslU subfamily.</text>
</comment>
<keyword id="KW-0067">ATP-binding</keyword>
<keyword id="KW-0143">Chaperone</keyword>
<keyword id="KW-0963">Cytoplasm</keyword>
<keyword id="KW-0547">Nucleotide-binding</keyword>
<keyword id="KW-1185">Reference proteome</keyword>
<keyword id="KW-0346">Stress response</keyword>
<organism>
    <name type="scientific">Hyphomonas neptunium (strain ATCC 15444)</name>
    <dbReference type="NCBI Taxonomy" id="228405"/>
    <lineage>
        <taxon>Bacteria</taxon>
        <taxon>Pseudomonadati</taxon>
        <taxon>Pseudomonadota</taxon>
        <taxon>Alphaproteobacteria</taxon>
        <taxon>Hyphomonadales</taxon>
        <taxon>Hyphomonadaceae</taxon>
        <taxon>Hyphomonas</taxon>
    </lineage>
</organism>
<protein>
    <recommendedName>
        <fullName evidence="1">ATP-dependent protease ATPase subunit HslU</fullName>
    </recommendedName>
    <alternativeName>
        <fullName evidence="1">Unfoldase HslU</fullName>
    </alternativeName>
</protein>
<gene>
    <name evidence="1" type="primary">hslU</name>
    <name type="ordered locus">HNE_2034</name>
</gene>
<name>HSLU_HYPNA</name>